<sequence length="141" mass="15291">MSIVIGADAAGLRLKEVVKDFLEKENFHLVDVTAEGQDFVDVTLAVAAEVNKEEQNLGIVIDAYGAGPFMVATKIKGMVAAEVSDERSAYMTRGHNNSRMITMGAQLVGDELAKNIAKGFVNGKYDGGRHQIRVDMLNKMC</sequence>
<dbReference type="EC" id="5.3.1.26" evidence="1"/>
<dbReference type="EMBL" id="CP000920">
    <property type="protein sequence ID" value="ACO20352.1"/>
    <property type="molecule type" value="Genomic_DNA"/>
</dbReference>
<dbReference type="RefSeq" id="WP_000029271.1">
    <property type="nucleotide sequence ID" value="NC_012467.1"/>
</dbReference>
<dbReference type="SMR" id="C1CKT9"/>
<dbReference type="KEGG" id="spp:SPP_1234"/>
<dbReference type="HOGENOM" id="CLU_091396_4_2_9"/>
<dbReference type="UniPathway" id="UPA00702">
    <property type="reaction ID" value="UER00714"/>
</dbReference>
<dbReference type="GO" id="GO:0050044">
    <property type="term" value="F:galactose-6-phosphate isomerase activity"/>
    <property type="evidence" value="ECO:0007669"/>
    <property type="project" value="UniProtKB-UniRule"/>
</dbReference>
<dbReference type="GO" id="GO:0004751">
    <property type="term" value="F:ribose-5-phosphate isomerase activity"/>
    <property type="evidence" value="ECO:0007669"/>
    <property type="project" value="TreeGrafter"/>
</dbReference>
<dbReference type="GO" id="GO:0019316">
    <property type="term" value="P:D-allose catabolic process"/>
    <property type="evidence" value="ECO:0007669"/>
    <property type="project" value="TreeGrafter"/>
</dbReference>
<dbReference type="GO" id="GO:0019388">
    <property type="term" value="P:galactose catabolic process"/>
    <property type="evidence" value="ECO:0007669"/>
    <property type="project" value="UniProtKB-UniPathway"/>
</dbReference>
<dbReference type="GO" id="GO:0019512">
    <property type="term" value="P:lactose catabolic process via tagatose-6-phosphate"/>
    <property type="evidence" value="ECO:0007669"/>
    <property type="project" value="UniProtKB-UniRule"/>
</dbReference>
<dbReference type="GO" id="GO:0009052">
    <property type="term" value="P:pentose-phosphate shunt, non-oxidative branch"/>
    <property type="evidence" value="ECO:0007669"/>
    <property type="project" value="TreeGrafter"/>
</dbReference>
<dbReference type="Gene3D" id="3.40.1400.10">
    <property type="entry name" value="Sugar-phosphate isomerase, RpiB/LacA/LacB"/>
    <property type="match status" value="1"/>
</dbReference>
<dbReference type="HAMAP" id="MF_01555">
    <property type="entry name" value="LacA"/>
    <property type="match status" value="1"/>
</dbReference>
<dbReference type="InterPro" id="IPR004783">
    <property type="entry name" value="LacA"/>
</dbReference>
<dbReference type="InterPro" id="IPR003500">
    <property type="entry name" value="RpiB_LacA_LacB"/>
</dbReference>
<dbReference type="InterPro" id="IPR036569">
    <property type="entry name" value="RpiB_LacA_LacB_sf"/>
</dbReference>
<dbReference type="NCBIfam" id="TIGR01118">
    <property type="entry name" value="lacA"/>
    <property type="match status" value="1"/>
</dbReference>
<dbReference type="NCBIfam" id="NF006380">
    <property type="entry name" value="PRK08621.1"/>
    <property type="match status" value="1"/>
</dbReference>
<dbReference type="NCBIfam" id="NF009257">
    <property type="entry name" value="PRK12613.1"/>
    <property type="match status" value="1"/>
</dbReference>
<dbReference type="NCBIfam" id="TIGR00689">
    <property type="entry name" value="rpiB_lacA_lacB"/>
    <property type="match status" value="1"/>
</dbReference>
<dbReference type="PANTHER" id="PTHR30345:SF5">
    <property type="entry name" value="GALACTOSE-6-PHOSPHATE ISOMERASE SUBUNIT LACA"/>
    <property type="match status" value="1"/>
</dbReference>
<dbReference type="PANTHER" id="PTHR30345">
    <property type="entry name" value="RIBOSE-5-PHOSPHATE ISOMERASE B"/>
    <property type="match status" value="1"/>
</dbReference>
<dbReference type="Pfam" id="PF02502">
    <property type="entry name" value="LacAB_rpiB"/>
    <property type="match status" value="1"/>
</dbReference>
<dbReference type="PIRSF" id="PIRSF005384">
    <property type="entry name" value="RpiB_LacA_B"/>
    <property type="match status" value="1"/>
</dbReference>
<dbReference type="SUPFAM" id="SSF89623">
    <property type="entry name" value="Ribose/Galactose isomerase RpiB/AlsB"/>
    <property type="match status" value="1"/>
</dbReference>
<reference key="1">
    <citation type="journal article" date="2010" name="Genome Biol.">
        <title>Structure and dynamics of the pan-genome of Streptococcus pneumoniae and closely related species.</title>
        <authorList>
            <person name="Donati C."/>
            <person name="Hiller N.L."/>
            <person name="Tettelin H."/>
            <person name="Muzzi A."/>
            <person name="Croucher N.J."/>
            <person name="Angiuoli S.V."/>
            <person name="Oggioni M."/>
            <person name="Dunning Hotopp J.C."/>
            <person name="Hu F.Z."/>
            <person name="Riley D.R."/>
            <person name="Covacci A."/>
            <person name="Mitchell T.J."/>
            <person name="Bentley S.D."/>
            <person name="Kilian M."/>
            <person name="Ehrlich G.D."/>
            <person name="Rappuoli R."/>
            <person name="Moxon E.R."/>
            <person name="Masignani V."/>
        </authorList>
    </citation>
    <scope>NUCLEOTIDE SEQUENCE [LARGE SCALE GENOMIC DNA]</scope>
    <source>
        <strain>P1031</strain>
    </source>
</reference>
<feature type="chain" id="PRO_1000185400" description="Galactose-6-phosphate isomerase subunit LacA">
    <location>
        <begin position="1"/>
        <end position="141"/>
    </location>
</feature>
<evidence type="ECO:0000255" key="1">
    <source>
        <dbReference type="HAMAP-Rule" id="MF_01555"/>
    </source>
</evidence>
<keyword id="KW-0413">Isomerase</keyword>
<keyword id="KW-0423">Lactose metabolism</keyword>
<name>LACA_STRZP</name>
<gene>
    <name evidence="1" type="primary">lacA</name>
    <name type="ordered locus">SPP_1234</name>
</gene>
<proteinExistence type="inferred from homology"/>
<accession>C1CKT9</accession>
<organism>
    <name type="scientific">Streptococcus pneumoniae (strain P1031)</name>
    <dbReference type="NCBI Taxonomy" id="488223"/>
    <lineage>
        <taxon>Bacteria</taxon>
        <taxon>Bacillati</taxon>
        <taxon>Bacillota</taxon>
        <taxon>Bacilli</taxon>
        <taxon>Lactobacillales</taxon>
        <taxon>Streptococcaceae</taxon>
        <taxon>Streptococcus</taxon>
    </lineage>
</organism>
<comment type="catalytic activity">
    <reaction evidence="1">
        <text>aldehydo-D-galactose 6-phosphate = keto-D-tagatose 6-phosphate</text>
        <dbReference type="Rhea" id="RHEA:13033"/>
        <dbReference type="ChEBI" id="CHEBI:58255"/>
        <dbReference type="ChEBI" id="CHEBI:134283"/>
        <dbReference type="EC" id="5.3.1.26"/>
    </reaction>
</comment>
<comment type="pathway">
    <text evidence="1">Carbohydrate metabolism; D-galactose 6-phosphate degradation; D-tagatose 6-phosphate from D-galactose 6-phosphate: step 1/1.</text>
</comment>
<comment type="subunit">
    <text evidence="1">Heteromultimeric protein consisting of LacA and LacB.</text>
</comment>
<comment type="similarity">
    <text evidence="1">Belongs to the LacAB/RpiB family.</text>
</comment>
<protein>
    <recommendedName>
        <fullName evidence="1">Galactose-6-phosphate isomerase subunit LacA</fullName>
        <ecNumber evidence="1">5.3.1.26</ecNumber>
    </recommendedName>
</protein>